<organism>
    <name type="scientific">Homo sapiens</name>
    <name type="common">Human</name>
    <dbReference type="NCBI Taxonomy" id="9606"/>
    <lineage>
        <taxon>Eukaryota</taxon>
        <taxon>Metazoa</taxon>
        <taxon>Chordata</taxon>
        <taxon>Craniata</taxon>
        <taxon>Vertebrata</taxon>
        <taxon>Euteleostomi</taxon>
        <taxon>Mammalia</taxon>
        <taxon>Eutheria</taxon>
        <taxon>Euarchontoglires</taxon>
        <taxon>Primates</taxon>
        <taxon>Haplorrhini</taxon>
        <taxon>Catarrhini</taxon>
        <taxon>Hominidae</taxon>
        <taxon>Homo</taxon>
    </lineage>
</organism>
<name>RPAP3_HUMAN</name>
<reference key="1">
    <citation type="journal article" date="2004" name="Nat. Genet.">
        <title>Complete sequencing and characterization of 21,243 full-length human cDNAs.</title>
        <authorList>
            <person name="Ota T."/>
            <person name="Suzuki Y."/>
            <person name="Nishikawa T."/>
            <person name="Otsuki T."/>
            <person name="Sugiyama T."/>
            <person name="Irie R."/>
            <person name="Wakamatsu A."/>
            <person name="Hayashi K."/>
            <person name="Sato H."/>
            <person name="Nagai K."/>
            <person name="Kimura K."/>
            <person name="Makita H."/>
            <person name="Sekine M."/>
            <person name="Obayashi M."/>
            <person name="Nishi T."/>
            <person name="Shibahara T."/>
            <person name="Tanaka T."/>
            <person name="Ishii S."/>
            <person name="Yamamoto J."/>
            <person name="Saito K."/>
            <person name="Kawai Y."/>
            <person name="Isono Y."/>
            <person name="Nakamura Y."/>
            <person name="Nagahari K."/>
            <person name="Murakami K."/>
            <person name="Yasuda T."/>
            <person name="Iwayanagi T."/>
            <person name="Wagatsuma M."/>
            <person name="Shiratori A."/>
            <person name="Sudo H."/>
            <person name="Hosoiri T."/>
            <person name="Kaku Y."/>
            <person name="Kodaira H."/>
            <person name="Kondo H."/>
            <person name="Sugawara M."/>
            <person name="Takahashi M."/>
            <person name="Kanda K."/>
            <person name="Yokoi T."/>
            <person name="Furuya T."/>
            <person name="Kikkawa E."/>
            <person name="Omura Y."/>
            <person name="Abe K."/>
            <person name="Kamihara K."/>
            <person name="Katsuta N."/>
            <person name="Sato K."/>
            <person name="Tanikawa M."/>
            <person name="Yamazaki M."/>
            <person name="Ninomiya K."/>
            <person name="Ishibashi T."/>
            <person name="Yamashita H."/>
            <person name="Murakawa K."/>
            <person name="Fujimori K."/>
            <person name="Tanai H."/>
            <person name="Kimata M."/>
            <person name="Watanabe M."/>
            <person name="Hiraoka S."/>
            <person name="Chiba Y."/>
            <person name="Ishida S."/>
            <person name="Ono Y."/>
            <person name="Takiguchi S."/>
            <person name="Watanabe S."/>
            <person name="Yosida M."/>
            <person name="Hotuta T."/>
            <person name="Kusano J."/>
            <person name="Kanehori K."/>
            <person name="Takahashi-Fujii A."/>
            <person name="Hara H."/>
            <person name="Tanase T.-O."/>
            <person name="Nomura Y."/>
            <person name="Togiya S."/>
            <person name="Komai F."/>
            <person name="Hara R."/>
            <person name="Takeuchi K."/>
            <person name="Arita M."/>
            <person name="Imose N."/>
            <person name="Musashino K."/>
            <person name="Yuuki H."/>
            <person name="Oshima A."/>
            <person name="Sasaki N."/>
            <person name="Aotsuka S."/>
            <person name="Yoshikawa Y."/>
            <person name="Matsunawa H."/>
            <person name="Ichihara T."/>
            <person name="Shiohata N."/>
            <person name="Sano S."/>
            <person name="Moriya S."/>
            <person name="Momiyama H."/>
            <person name="Satoh N."/>
            <person name="Takami S."/>
            <person name="Terashima Y."/>
            <person name="Suzuki O."/>
            <person name="Nakagawa S."/>
            <person name="Senoh A."/>
            <person name="Mizoguchi H."/>
            <person name="Goto Y."/>
            <person name="Shimizu F."/>
            <person name="Wakebe H."/>
            <person name="Hishigaki H."/>
            <person name="Watanabe T."/>
            <person name="Sugiyama A."/>
            <person name="Takemoto M."/>
            <person name="Kawakami B."/>
            <person name="Yamazaki M."/>
            <person name="Watanabe K."/>
            <person name="Kumagai A."/>
            <person name="Itakura S."/>
            <person name="Fukuzumi Y."/>
            <person name="Fujimori Y."/>
            <person name="Komiyama M."/>
            <person name="Tashiro H."/>
            <person name="Tanigami A."/>
            <person name="Fujiwara T."/>
            <person name="Ono T."/>
            <person name="Yamada K."/>
            <person name="Fujii Y."/>
            <person name="Ozaki K."/>
            <person name="Hirao M."/>
            <person name="Ohmori Y."/>
            <person name="Kawabata A."/>
            <person name="Hikiji T."/>
            <person name="Kobatake N."/>
            <person name="Inagaki H."/>
            <person name="Ikema Y."/>
            <person name="Okamoto S."/>
            <person name="Okitani R."/>
            <person name="Kawakami T."/>
            <person name="Noguchi S."/>
            <person name="Itoh T."/>
            <person name="Shigeta K."/>
            <person name="Senba T."/>
            <person name="Matsumura K."/>
            <person name="Nakajima Y."/>
            <person name="Mizuno T."/>
            <person name="Morinaga M."/>
            <person name="Sasaki M."/>
            <person name="Togashi T."/>
            <person name="Oyama M."/>
            <person name="Hata H."/>
            <person name="Watanabe M."/>
            <person name="Komatsu T."/>
            <person name="Mizushima-Sugano J."/>
            <person name="Satoh T."/>
            <person name="Shirai Y."/>
            <person name="Takahashi Y."/>
            <person name="Nakagawa K."/>
            <person name="Okumura K."/>
            <person name="Nagase T."/>
            <person name="Nomura N."/>
            <person name="Kikuchi H."/>
            <person name="Masuho Y."/>
            <person name="Yamashita R."/>
            <person name="Nakai K."/>
            <person name="Yada T."/>
            <person name="Nakamura Y."/>
            <person name="Ohara O."/>
            <person name="Isogai T."/>
            <person name="Sugano S."/>
        </authorList>
    </citation>
    <scope>NUCLEOTIDE SEQUENCE [LARGE SCALE MRNA] (ISOFORMS 1 AND 3)</scope>
    <source>
        <tissue>Tongue</tissue>
    </source>
</reference>
<reference key="2">
    <citation type="journal article" date="2006" name="Nature">
        <title>The finished DNA sequence of human chromosome 12.</title>
        <authorList>
            <person name="Scherer S.E."/>
            <person name="Muzny D.M."/>
            <person name="Buhay C.J."/>
            <person name="Chen R."/>
            <person name="Cree A."/>
            <person name="Ding Y."/>
            <person name="Dugan-Rocha S."/>
            <person name="Gill R."/>
            <person name="Gunaratne P."/>
            <person name="Harris R.A."/>
            <person name="Hawes A.C."/>
            <person name="Hernandez J."/>
            <person name="Hodgson A.V."/>
            <person name="Hume J."/>
            <person name="Jackson A."/>
            <person name="Khan Z.M."/>
            <person name="Kovar-Smith C."/>
            <person name="Lewis L.R."/>
            <person name="Lozado R.J."/>
            <person name="Metzker M.L."/>
            <person name="Milosavljevic A."/>
            <person name="Miner G.R."/>
            <person name="Montgomery K.T."/>
            <person name="Morgan M.B."/>
            <person name="Nazareth L.V."/>
            <person name="Scott G."/>
            <person name="Sodergren E."/>
            <person name="Song X.-Z."/>
            <person name="Steffen D."/>
            <person name="Lovering R.C."/>
            <person name="Wheeler D.A."/>
            <person name="Worley K.C."/>
            <person name="Yuan Y."/>
            <person name="Zhang Z."/>
            <person name="Adams C.Q."/>
            <person name="Ansari-Lari M.A."/>
            <person name="Ayele M."/>
            <person name="Brown M.J."/>
            <person name="Chen G."/>
            <person name="Chen Z."/>
            <person name="Clerc-Blankenburg K.P."/>
            <person name="Davis C."/>
            <person name="Delgado O."/>
            <person name="Dinh H.H."/>
            <person name="Draper H."/>
            <person name="Gonzalez-Garay M.L."/>
            <person name="Havlak P."/>
            <person name="Jackson L.R."/>
            <person name="Jacob L.S."/>
            <person name="Kelly S.H."/>
            <person name="Li L."/>
            <person name="Li Z."/>
            <person name="Liu J."/>
            <person name="Liu W."/>
            <person name="Lu J."/>
            <person name="Maheshwari M."/>
            <person name="Nguyen B.-V."/>
            <person name="Okwuonu G.O."/>
            <person name="Pasternak S."/>
            <person name="Perez L.M."/>
            <person name="Plopper F.J.H."/>
            <person name="Santibanez J."/>
            <person name="Shen H."/>
            <person name="Tabor P.E."/>
            <person name="Verduzco D."/>
            <person name="Waldron L."/>
            <person name="Wang Q."/>
            <person name="Williams G.A."/>
            <person name="Zhang J."/>
            <person name="Zhou J."/>
            <person name="Allen C.C."/>
            <person name="Amin A.G."/>
            <person name="Anyalebechi V."/>
            <person name="Bailey M."/>
            <person name="Barbaria J.A."/>
            <person name="Bimage K.E."/>
            <person name="Bryant N.P."/>
            <person name="Burch P.E."/>
            <person name="Burkett C.E."/>
            <person name="Burrell K.L."/>
            <person name="Calderon E."/>
            <person name="Cardenas V."/>
            <person name="Carter K."/>
            <person name="Casias K."/>
            <person name="Cavazos I."/>
            <person name="Cavazos S.R."/>
            <person name="Ceasar H."/>
            <person name="Chacko J."/>
            <person name="Chan S.N."/>
            <person name="Chavez D."/>
            <person name="Christopoulos C."/>
            <person name="Chu J."/>
            <person name="Cockrell R."/>
            <person name="Cox C.D."/>
            <person name="Dang M."/>
            <person name="Dathorne S.R."/>
            <person name="David R."/>
            <person name="Davis C.M."/>
            <person name="Davy-Carroll L."/>
            <person name="Deshazo D.R."/>
            <person name="Donlin J.E."/>
            <person name="D'Souza L."/>
            <person name="Eaves K.A."/>
            <person name="Egan A."/>
            <person name="Emery-Cohen A.J."/>
            <person name="Escotto M."/>
            <person name="Flagg N."/>
            <person name="Forbes L.D."/>
            <person name="Gabisi A.M."/>
            <person name="Garza M."/>
            <person name="Hamilton C."/>
            <person name="Henderson N."/>
            <person name="Hernandez O."/>
            <person name="Hines S."/>
            <person name="Hogues M.E."/>
            <person name="Huang M."/>
            <person name="Idlebird D.G."/>
            <person name="Johnson R."/>
            <person name="Jolivet A."/>
            <person name="Jones S."/>
            <person name="Kagan R."/>
            <person name="King L.M."/>
            <person name="Leal B."/>
            <person name="Lebow H."/>
            <person name="Lee S."/>
            <person name="LeVan J.M."/>
            <person name="Lewis L.C."/>
            <person name="London P."/>
            <person name="Lorensuhewa L.M."/>
            <person name="Loulseged H."/>
            <person name="Lovett D.A."/>
            <person name="Lucier A."/>
            <person name="Lucier R.L."/>
            <person name="Ma J."/>
            <person name="Madu R.C."/>
            <person name="Mapua P."/>
            <person name="Martindale A.D."/>
            <person name="Martinez E."/>
            <person name="Massey E."/>
            <person name="Mawhiney S."/>
            <person name="Meador M.G."/>
            <person name="Mendez S."/>
            <person name="Mercado C."/>
            <person name="Mercado I.C."/>
            <person name="Merritt C.E."/>
            <person name="Miner Z.L."/>
            <person name="Minja E."/>
            <person name="Mitchell T."/>
            <person name="Mohabbat F."/>
            <person name="Mohabbat K."/>
            <person name="Montgomery B."/>
            <person name="Moore N."/>
            <person name="Morris S."/>
            <person name="Munidasa M."/>
            <person name="Ngo R.N."/>
            <person name="Nguyen N.B."/>
            <person name="Nickerson E."/>
            <person name="Nwaokelemeh O.O."/>
            <person name="Nwokenkwo S."/>
            <person name="Obregon M."/>
            <person name="Oguh M."/>
            <person name="Oragunye N."/>
            <person name="Oviedo R.J."/>
            <person name="Parish B.J."/>
            <person name="Parker D.N."/>
            <person name="Parrish J."/>
            <person name="Parks K.L."/>
            <person name="Paul H.A."/>
            <person name="Payton B.A."/>
            <person name="Perez A."/>
            <person name="Perrin W."/>
            <person name="Pickens A."/>
            <person name="Primus E.L."/>
            <person name="Pu L.-L."/>
            <person name="Puazo M."/>
            <person name="Quiles M.M."/>
            <person name="Quiroz J.B."/>
            <person name="Rabata D."/>
            <person name="Reeves K."/>
            <person name="Ruiz S.J."/>
            <person name="Shao H."/>
            <person name="Sisson I."/>
            <person name="Sonaike T."/>
            <person name="Sorelle R.P."/>
            <person name="Sutton A.E."/>
            <person name="Svatek A.F."/>
            <person name="Svetz L.A."/>
            <person name="Tamerisa K.S."/>
            <person name="Taylor T.R."/>
            <person name="Teague B."/>
            <person name="Thomas N."/>
            <person name="Thorn R.D."/>
            <person name="Trejos Z.Y."/>
            <person name="Trevino B.K."/>
            <person name="Ukegbu O.N."/>
            <person name="Urban J.B."/>
            <person name="Vasquez L.I."/>
            <person name="Vera V.A."/>
            <person name="Villasana D.M."/>
            <person name="Wang L."/>
            <person name="Ward-Moore S."/>
            <person name="Warren J.T."/>
            <person name="Wei X."/>
            <person name="White F."/>
            <person name="Williamson A.L."/>
            <person name="Wleczyk R."/>
            <person name="Wooden H.S."/>
            <person name="Wooden S.H."/>
            <person name="Yen J."/>
            <person name="Yoon L."/>
            <person name="Yoon V."/>
            <person name="Zorrilla S.E."/>
            <person name="Nelson D."/>
            <person name="Kucherlapati R."/>
            <person name="Weinstock G."/>
            <person name="Gibbs R.A."/>
        </authorList>
    </citation>
    <scope>NUCLEOTIDE SEQUENCE [LARGE SCALE GENOMIC DNA]</scope>
</reference>
<reference key="3">
    <citation type="submission" date="2005-07" db="EMBL/GenBank/DDBJ databases">
        <authorList>
            <person name="Mural R.J."/>
            <person name="Istrail S."/>
            <person name="Sutton G.G."/>
            <person name="Florea L."/>
            <person name="Halpern A.L."/>
            <person name="Mobarry C.M."/>
            <person name="Lippert R."/>
            <person name="Walenz B."/>
            <person name="Shatkay H."/>
            <person name="Dew I."/>
            <person name="Miller J.R."/>
            <person name="Flanigan M.J."/>
            <person name="Edwards N.J."/>
            <person name="Bolanos R."/>
            <person name="Fasulo D."/>
            <person name="Halldorsson B.V."/>
            <person name="Hannenhalli S."/>
            <person name="Turner R."/>
            <person name="Yooseph S."/>
            <person name="Lu F."/>
            <person name="Nusskern D.R."/>
            <person name="Shue B.C."/>
            <person name="Zheng X.H."/>
            <person name="Zhong F."/>
            <person name="Delcher A.L."/>
            <person name="Huson D.H."/>
            <person name="Kravitz S.A."/>
            <person name="Mouchard L."/>
            <person name="Reinert K."/>
            <person name="Remington K.A."/>
            <person name="Clark A.G."/>
            <person name="Waterman M.S."/>
            <person name="Eichler E.E."/>
            <person name="Adams M.D."/>
            <person name="Hunkapiller M.W."/>
            <person name="Myers E.W."/>
            <person name="Venter J.C."/>
        </authorList>
    </citation>
    <scope>NUCLEOTIDE SEQUENCE [LARGE SCALE GENOMIC DNA]</scope>
</reference>
<reference key="4">
    <citation type="journal article" date="2004" name="Genome Res.">
        <title>The status, quality, and expansion of the NIH full-length cDNA project: the Mammalian Gene Collection (MGC).</title>
        <authorList>
            <consortium name="The MGC Project Team"/>
        </authorList>
    </citation>
    <scope>NUCLEOTIDE SEQUENCE [LARGE SCALE MRNA] (ISOFORM 2)</scope>
    <source>
        <tissue>Blood</tissue>
    </source>
</reference>
<reference key="5">
    <citation type="journal article" date="2007" name="Mol. Cell">
        <title>Systematic analysis of the protein interaction network for the human transcription machinery reveals the identity of the 7SK capping enzyme.</title>
        <authorList>
            <person name="Jeronimo C."/>
            <person name="Forget D."/>
            <person name="Bouchard A."/>
            <person name="Li Q."/>
            <person name="Chua G."/>
            <person name="Poitras C."/>
            <person name="Therien C."/>
            <person name="Bergeron D."/>
            <person name="Bourassa S."/>
            <person name="Greenblatt J."/>
            <person name="Chabot B."/>
            <person name="Poirier G.G."/>
            <person name="Hughes T.R."/>
            <person name="Blanchette M."/>
            <person name="Price D.H."/>
            <person name="Coulombe B."/>
        </authorList>
    </citation>
    <scope>FUNCTION</scope>
    <scope>IDENTIFICATION BY MASS SPECTROMETRY</scope>
    <scope>IDENTIFICATION IN THE RNA POLYMERASE II COMPLEX</scope>
</reference>
<reference key="6">
    <citation type="journal article" date="2008" name="Proc. Natl. Acad. Sci. U.S.A.">
        <title>A quantitative atlas of mitotic phosphorylation.</title>
        <authorList>
            <person name="Dephoure N."/>
            <person name="Zhou C."/>
            <person name="Villen J."/>
            <person name="Beausoleil S.A."/>
            <person name="Bakalarski C.E."/>
            <person name="Elledge S.J."/>
            <person name="Gygi S.P."/>
        </authorList>
    </citation>
    <scope>PHOSPHORYLATION [LARGE SCALE ANALYSIS] AT SER-87; SER-116; SER-119; SER-121 AND SER-481</scope>
    <scope>IDENTIFICATION BY MASS SPECTROMETRY [LARGE SCALE ANALYSIS]</scope>
    <source>
        <tissue>Cervix carcinoma</tissue>
    </source>
</reference>
<reference key="7">
    <citation type="journal article" date="2009" name="Sci. Signal.">
        <title>Quantitative phosphoproteomic analysis of T cell receptor signaling reveals system-wide modulation of protein-protein interactions.</title>
        <authorList>
            <person name="Mayya V."/>
            <person name="Lundgren D.H."/>
            <person name="Hwang S.-I."/>
            <person name="Rezaul K."/>
            <person name="Wu L."/>
            <person name="Eng J.K."/>
            <person name="Rodionov V."/>
            <person name="Han D.K."/>
        </authorList>
    </citation>
    <scope>IDENTIFICATION BY MASS SPECTROMETRY [LARGE SCALE ANALYSIS]</scope>
    <source>
        <tissue>Leukemic T-cell</tissue>
    </source>
</reference>
<reference key="8">
    <citation type="journal article" date="2010" name="Biochem. Biophys. Res. Commun.">
        <title>PIH1D1, a subunit of R2TP complex, inhibits doxorubicin-induced apoptosis.</title>
        <authorList>
            <person name="Inoue M."/>
            <person name="Saeki M."/>
            <person name="Egusa H."/>
            <person name="Niwa H."/>
            <person name="Kamisaki Y."/>
        </authorList>
    </citation>
    <scope>INTERACTION WITH PIH1D1</scope>
</reference>
<reference key="9">
    <citation type="journal article" date="2010" name="Mol. Cell">
        <title>CK2 phospho-dependent binding of R2TP complex to TEL2 is essential for mTOR and SMG1 stability.</title>
        <authorList>
            <person name="Horejsi Z."/>
            <person name="Takai H."/>
            <person name="Adelman C.A."/>
            <person name="Collis S.J."/>
            <person name="Flynn H."/>
            <person name="Maslen S."/>
            <person name="Skehel J.M."/>
            <person name="de Lange T."/>
            <person name="Boulton S.J."/>
        </authorList>
    </citation>
    <scope>IDENTIFICATION IN THE R2TP COMPLEX</scope>
</reference>
<reference key="10">
    <citation type="journal article" date="2010" name="Sci. Signal.">
        <title>Quantitative phosphoproteomics reveals widespread full phosphorylation site occupancy during mitosis.</title>
        <authorList>
            <person name="Olsen J.V."/>
            <person name="Vermeulen M."/>
            <person name="Santamaria A."/>
            <person name="Kumar C."/>
            <person name="Miller M.L."/>
            <person name="Jensen L.J."/>
            <person name="Gnad F."/>
            <person name="Cox J."/>
            <person name="Jensen T.S."/>
            <person name="Nigg E.A."/>
            <person name="Brunak S."/>
            <person name="Mann M."/>
        </authorList>
    </citation>
    <scope>IDENTIFICATION BY MASS SPECTROMETRY [LARGE SCALE ANALYSIS]</scope>
    <source>
        <tissue>Cervix carcinoma</tissue>
    </source>
</reference>
<reference key="11">
    <citation type="journal article" date="2011" name="BMC Syst. Biol.">
        <title>Initial characterization of the human central proteome.</title>
        <authorList>
            <person name="Burkard T.R."/>
            <person name="Planyavsky M."/>
            <person name="Kaupe I."/>
            <person name="Breitwieser F.P."/>
            <person name="Buerckstuemmer T."/>
            <person name="Bennett K.L."/>
            <person name="Superti-Furga G."/>
            <person name="Colinge J."/>
        </authorList>
    </citation>
    <scope>IDENTIFICATION BY MASS SPECTROMETRY [LARGE SCALE ANALYSIS]</scope>
</reference>
<reference key="12">
    <citation type="journal article" date="2011" name="Sci. Signal.">
        <title>System-wide temporal characterization of the proteome and phosphoproteome of human embryonic stem cell differentiation.</title>
        <authorList>
            <person name="Rigbolt K.T."/>
            <person name="Prokhorova T.A."/>
            <person name="Akimov V."/>
            <person name="Henningsen J."/>
            <person name="Johansen P.T."/>
            <person name="Kratchmarova I."/>
            <person name="Kassem M."/>
            <person name="Mann M."/>
            <person name="Olsen J.V."/>
            <person name="Blagoev B."/>
        </authorList>
    </citation>
    <scope>PHOSPHORYLATION [LARGE SCALE ANALYSIS] AT SER-116; SER-119 AND SER-121</scope>
    <scope>IDENTIFICATION BY MASS SPECTROMETRY [LARGE SCALE ANALYSIS]</scope>
</reference>
<reference key="13">
    <citation type="journal article" date="2012" name="Proc. Natl. Acad. Sci. U.S.A.">
        <title>N-terminal acetylome analyses and functional insights of the N-terminal acetyltransferase NatB.</title>
        <authorList>
            <person name="Van Damme P."/>
            <person name="Lasa M."/>
            <person name="Polevoda B."/>
            <person name="Gazquez C."/>
            <person name="Elosegui-Artola A."/>
            <person name="Kim D.S."/>
            <person name="De Juan-Pardo E."/>
            <person name="Demeyer K."/>
            <person name="Hole K."/>
            <person name="Larrea E."/>
            <person name="Timmerman E."/>
            <person name="Prieto J."/>
            <person name="Arnesen T."/>
            <person name="Sherman F."/>
            <person name="Gevaert K."/>
            <person name="Aldabe R."/>
        </authorList>
    </citation>
    <scope>ACETYLATION [LARGE SCALE ANALYSIS] AT THR-2</scope>
    <scope>CLEAVAGE OF INITIATOR METHIONINE [LARGE SCALE ANALYSIS]</scope>
    <scope>IDENTIFICATION BY MASS SPECTROMETRY [LARGE SCALE ANALYSIS]</scope>
</reference>
<reference key="14">
    <citation type="journal article" date="2013" name="J. Proteome Res.">
        <title>Toward a comprehensive characterization of a human cancer cell phosphoproteome.</title>
        <authorList>
            <person name="Zhou H."/>
            <person name="Di Palma S."/>
            <person name="Preisinger C."/>
            <person name="Peng M."/>
            <person name="Polat A.N."/>
            <person name="Heck A.J."/>
            <person name="Mohammed S."/>
        </authorList>
    </citation>
    <scope>PHOSPHORYLATION [LARGE SCALE ANALYSIS] AT SER-481</scope>
    <scope>IDENTIFICATION BY MASS SPECTROMETRY [LARGE SCALE ANALYSIS]</scope>
    <source>
        <tissue>Cervix carcinoma</tissue>
        <tissue>Erythroleukemia</tissue>
    </source>
</reference>
<reference key="15">
    <citation type="journal article" date="2014" name="J. Proteomics">
        <title>An enzyme assisted RP-RPLC approach for in-depth analysis of human liver phosphoproteome.</title>
        <authorList>
            <person name="Bian Y."/>
            <person name="Song C."/>
            <person name="Cheng K."/>
            <person name="Dong M."/>
            <person name="Wang F."/>
            <person name="Huang J."/>
            <person name="Sun D."/>
            <person name="Wang L."/>
            <person name="Ye M."/>
            <person name="Zou H."/>
        </authorList>
    </citation>
    <scope>PHOSPHORYLATION [LARGE SCALE ANALYSIS] AT SER-119</scope>
    <scope>IDENTIFICATION BY MASS SPECTROMETRY [LARGE SCALE ANALYSIS]</scope>
    <source>
        <tissue>Liver</tissue>
    </source>
</reference>
<reference key="16">
    <citation type="journal article" date="2014" name="Nat. Struct. Mol. Biol.">
        <title>Uncovering global SUMOylation signaling networks in a site-specific manner.</title>
        <authorList>
            <person name="Hendriks I.A."/>
            <person name="D'Souza R.C."/>
            <person name="Yang B."/>
            <person name="Verlaan-de Vries M."/>
            <person name="Mann M."/>
            <person name="Vertegaal A.C."/>
        </authorList>
    </citation>
    <scope>SUMOYLATION [LARGE SCALE ANALYSIS] AT LYS-498</scope>
    <scope>IDENTIFICATION BY MASS SPECTROMETRY [LARGE SCALE ANALYSIS]</scope>
</reference>
<reference key="17">
    <citation type="journal article" date="2015" name="Cell Rep.">
        <title>SUMO-2 orchestrates chromatin modifiers in response to DNA damage.</title>
        <authorList>
            <person name="Hendriks I.A."/>
            <person name="Treffers L.W."/>
            <person name="Verlaan-de Vries M."/>
            <person name="Olsen J.V."/>
            <person name="Vertegaal A.C."/>
        </authorList>
    </citation>
    <scope>SUMOYLATION [LARGE SCALE ANALYSIS] AT LYS-498</scope>
    <scope>IDENTIFICATION BY MASS SPECTROMETRY [LARGE SCALE ANALYSIS]</scope>
</reference>
<reference key="18">
    <citation type="journal article" date="2017" name="Nat. Commun.">
        <title>R2TP/Prefoldin-like component RUVBL1/RUVBL2 directly interacts with ZNHIT2 to regulate assembly of U5 small nuclear ribonucleoprotein.</title>
        <authorList>
            <person name="Cloutier P."/>
            <person name="Poitras C."/>
            <person name="Durand M."/>
            <person name="Hekmat O."/>
            <person name="Fiola-Masson E."/>
            <person name="Bouchard A."/>
            <person name="Faubert D."/>
            <person name="Chabot B."/>
            <person name="Coulombe B."/>
        </authorList>
    </citation>
    <scope>INTERACTION WITH TSC1; TSC2; PRPF8 AND EFTUD2</scope>
</reference>
<reference key="19">
    <citation type="journal article" date="2017" name="Nat. Struct. Mol. Biol.">
        <title>Site-specific mapping of the human SUMO proteome reveals co-modification with phosphorylation.</title>
        <authorList>
            <person name="Hendriks I.A."/>
            <person name="Lyon D."/>
            <person name="Young C."/>
            <person name="Jensen L.J."/>
            <person name="Vertegaal A.C."/>
            <person name="Nielsen M.L."/>
        </authorList>
    </citation>
    <scope>SUMOYLATION [LARGE SCALE ANALYSIS] AT LYS-498</scope>
    <scope>IDENTIFICATION BY MASS SPECTROMETRY [LARGE SCALE ANALYSIS]</scope>
</reference>
<reference key="20">
    <citation type="journal article" date="2020" name="J. Proteome Res.">
        <title>Upstream ORF-Encoded ASDURF Is a Novel Prefoldin-like Subunit of the PAQosome.</title>
        <authorList>
            <person name="Cloutier P."/>
            <person name="Poitras C."/>
            <person name="Faubert D."/>
            <person name="Bouchard A."/>
            <person name="Blanchette M."/>
            <person name="Gauthier M.S."/>
            <person name="Coulombe B."/>
        </authorList>
    </citation>
    <scope>IDENTIFICATION IN THE PAQOSOME COMPLEX</scope>
    <scope>IDENTIFICATION BY MASS SPECTROMETRY</scope>
</reference>
<protein>
    <recommendedName>
        <fullName>RNA polymerase II-associated protein 3</fullName>
    </recommendedName>
</protein>
<dbReference type="EMBL" id="AK025561">
    <property type="protein sequence ID" value="BAB15170.1"/>
    <property type="molecule type" value="mRNA"/>
</dbReference>
<dbReference type="EMBL" id="AK299465">
    <property type="protein sequence ID" value="BAG61431.1"/>
    <property type="molecule type" value="mRNA"/>
</dbReference>
<dbReference type="EMBL" id="AC004241">
    <property type="status" value="NOT_ANNOTATED_CDS"/>
    <property type="molecule type" value="Genomic_DNA"/>
</dbReference>
<dbReference type="EMBL" id="CH471111">
    <property type="protein sequence ID" value="EAW57938.1"/>
    <property type="molecule type" value="Genomic_DNA"/>
</dbReference>
<dbReference type="EMBL" id="BC056415">
    <property type="protein sequence ID" value="AAH56415.1"/>
    <property type="molecule type" value="mRNA"/>
</dbReference>
<dbReference type="CCDS" id="CCDS53782.1">
    <molecule id="Q9H6T3-3"/>
</dbReference>
<dbReference type="CCDS" id="CCDS53783.1">
    <molecule id="Q9H6T3-2"/>
</dbReference>
<dbReference type="CCDS" id="CCDS8753.1">
    <molecule id="Q9H6T3-1"/>
</dbReference>
<dbReference type="RefSeq" id="NP_001139547.1">
    <molecule id="Q9H6T3-2"/>
    <property type="nucleotide sequence ID" value="NM_001146075.2"/>
</dbReference>
<dbReference type="RefSeq" id="NP_001139548.1">
    <molecule id="Q9H6T3-3"/>
    <property type="nucleotide sequence ID" value="NM_001146076.2"/>
</dbReference>
<dbReference type="RefSeq" id="NP_078880.2">
    <molecule id="Q9H6T3-1"/>
    <property type="nucleotide sequence ID" value="NM_024604.3"/>
</dbReference>
<dbReference type="PDB" id="4CGV">
    <property type="method" value="X-ray"/>
    <property type="resolution" value="2.54 A"/>
    <property type="chains" value="A/B/C/D=120-255"/>
</dbReference>
<dbReference type="PDB" id="4CGW">
    <property type="method" value="X-ray"/>
    <property type="resolution" value="3.00 A"/>
    <property type="chains" value="A/B=265-381"/>
</dbReference>
<dbReference type="PDB" id="6EZ4">
    <property type="method" value="NMR"/>
    <property type="chains" value="A=535-665"/>
</dbReference>
<dbReference type="PDB" id="6FD7">
    <property type="method" value="NMR"/>
    <property type="chains" value="A=133-255"/>
</dbReference>
<dbReference type="PDB" id="6FDP">
    <property type="method" value="NMR"/>
    <property type="chains" value="A=281-395"/>
</dbReference>
<dbReference type="PDB" id="6FDT">
    <property type="method" value="NMR"/>
    <property type="chains" value="A=281-396"/>
</dbReference>
<dbReference type="PDB" id="6FM8">
    <property type="method" value="X-ray"/>
    <property type="resolution" value="1.78 A"/>
    <property type="chains" value="A=576-625"/>
</dbReference>
<dbReference type="PDB" id="6FO1">
    <property type="method" value="EM"/>
    <property type="resolution" value="3.57 A"/>
    <property type="chains" value="G=1-665"/>
</dbReference>
<dbReference type="PDB" id="6GXZ">
    <property type="method" value="X-ray"/>
    <property type="resolution" value="2.96 A"/>
    <property type="chains" value="A/C=281-445"/>
</dbReference>
<dbReference type="PDB" id="6ZBK">
    <property type="method" value="X-ray"/>
    <property type="resolution" value="1.49 A"/>
    <property type="chains" value="A=133-255"/>
</dbReference>
<dbReference type="PDBsum" id="4CGV"/>
<dbReference type="PDBsum" id="4CGW"/>
<dbReference type="PDBsum" id="6EZ4"/>
<dbReference type="PDBsum" id="6FD7"/>
<dbReference type="PDBsum" id="6FDP"/>
<dbReference type="PDBsum" id="6FDT"/>
<dbReference type="PDBsum" id="6FM8"/>
<dbReference type="PDBsum" id="6FO1"/>
<dbReference type="PDBsum" id="6GXZ"/>
<dbReference type="PDBsum" id="6ZBK"/>
<dbReference type="EMDB" id="EMD-4287"/>
<dbReference type="EMDB" id="EMD-4289"/>
<dbReference type="EMDB" id="EMD-4290"/>
<dbReference type="EMDB" id="EMD-4554"/>
<dbReference type="EMDB" id="EMD-4555"/>
<dbReference type="EMDB" id="EMD-4556"/>
<dbReference type="EMDB" id="EMD-4557"/>
<dbReference type="SMR" id="Q9H6T3"/>
<dbReference type="BioGRID" id="122783">
    <property type="interactions" value="236"/>
</dbReference>
<dbReference type="ComplexPortal" id="CPX-6143">
    <property type="entry name" value="R2TP core co-chaperone complex"/>
</dbReference>
<dbReference type="ComplexPortal" id="CPX-6153">
    <molecule id="Q9H6T3-2"/>
    <property type="entry name" value="R2T co-chaperone complex"/>
</dbReference>
<dbReference type="CORUM" id="Q9H6T3"/>
<dbReference type="DIP" id="DIP-47508N"/>
<dbReference type="FunCoup" id="Q9H6T3">
    <property type="interactions" value="1472"/>
</dbReference>
<dbReference type="IntAct" id="Q9H6T3">
    <property type="interactions" value="117"/>
</dbReference>
<dbReference type="MINT" id="Q9H6T3"/>
<dbReference type="STRING" id="9606.ENSP00000005386"/>
<dbReference type="GlyGen" id="Q9H6T3">
    <property type="glycosylation" value="1 site, 1 O-linked glycan (1 site)"/>
</dbReference>
<dbReference type="iPTMnet" id="Q9H6T3"/>
<dbReference type="MetOSite" id="Q9H6T3"/>
<dbReference type="PhosphoSitePlus" id="Q9H6T3"/>
<dbReference type="BioMuta" id="RPAP3"/>
<dbReference type="DMDM" id="158564023"/>
<dbReference type="jPOST" id="Q9H6T3"/>
<dbReference type="MassIVE" id="Q9H6T3"/>
<dbReference type="PaxDb" id="9606-ENSP00000005386"/>
<dbReference type="PeptideAtlas" id="Q9H6T3"/>
<dbReference type="ProteomicsDB" id="81032">
    <molecule id="Q9H6T3-1"/>
</dbReference>
<dbReference type="ProteomicsDB" id="81033">
    <molecule id="Q9H6T3-2"/>
</dbReference>
<dbReference type="Pumba" id="Q9H6T3"/>
<dbReference type="Antibodypedia" id="25352">
    <property type="antibodies" value="161 antibodies from 29 providers"/>
</dbReference>
<dbReference type="DNASU" id="79657"/>
<dbReference type="Ensembl" id="ENST00000005386.8">
    <molecule id="Q9H6T3-1"/>
    <property type="protein sequence ID" value="ENSP00000005386.3"/>
    <property type="gene ID" value="ENSG00000005175.10"/>
</dbReference>
<dbReference type="Ensembl" id="ENST00000380650.4">
    <molecule id="Q9H6T3-2"/>
    <property type="protein sequence ID" value="ENSP00000370024.4"/>
    <property type="gene ID" value="ENSG00000005175.10"/>
</dbReference>
<dbReference type="Ensembl" id="ENST00000432584.7">
    <molecule id="Q9H6T3-3"/>
    <property type="protein sequence ID" value="ENSP00000401823.3"/>
    <property type="gene ID" value="ENSG00000005175.10"/>
</dbReference>
<dbReference type="GeneID" id="79657"/>
<dbReference type="KEGG" id="hsa:79657"/>
<dbReference type="MANE-Select" id="ENST00000005386.8">
    <property type="protein sequence ID" value="ENSP00000005386.3"/>
    <property type="RefSeq nucleotide sequence ID" value="NM_024604.3"/>
    <property type="RefSeq protein sequence ID" value="NP_078880.2"/>
</dbReference>
<dbReference type="UCSC" id="uc001rpr.4">
    <molecule id="Q9H6T3-1"/>
    <property type="organism name" value="human"/>
</dbReference>
<dbReference type="AGR" id="HGNC:26151"/>
<dbReference type="CTD" id="79657"/>
<dbReference type="DisGeNET" id="79657"/>
<dbReference type="GeneCards" id="RPAP3"/>
<dbReference type="HGNC" id="HGNC:26151">
    <property type="gene designation" value="RPAP3"/>
</dbReference>
<dbReference type="HPA" id="ENSG00000005175">
    <property type="expression patterns" value="Low tissue specificity"/>
</dbReference>
<dbReference type="MIM" id="611477">
    <property type="type" value="gene"/>
</dbReference>
<dbReference type="neXtProt" id="NX_Q9H6T3"/>
<dbReference type="OpenTargets" id="ENSG00000005175"/>
<dbReference type="PharmGKB" id="PA162401982"/>
<dbReference type="VEuPathDB" id="HostDB:ENSG00000005175"/>
<dbReference type="eggNOG" id="KOG4648">
    <property type="taxonomic scope" value="Eukaryota"/>
</dbReference>
<dbReference type="GeneTree" id="ENSGT00940000156749"/>
<dbReference type="HOGENOM" id="CLU_023272_1_0_1"/>
<dbReference type="InParanoid" id="Q9H6T3"/>
<dbReference type="OMA" id="NFTPDRP"/>
<dbReference type="OrthoDB" id="629492at2759"/>
<dbReference type="PAN-GO" id="Q9H6T3">
    <property type="GO annotations" value="1 GO annotation based on evolutionary models"/>
</dbReference>
<dbReference type="PhylomeDB" id="Q9H6T3"/>
<dbReference type="TreeFam" id="TF106243"/>
<dbReference type="PathwayCommons" id="Q9H6T3"/>
<dbReference type="SignaLink" id="Q9H6T3"/>
<dbReference type="SIGNOR" id="Q9H6T3"/>
<dbReference type="BioGRID-ORCS" id="79657">
    <property type="hits" value="613 hits in 1169 CRISPR screens"/>
</dbReference>
<dbReference type="ChiTaRS" id="RPAP3">
    <property type="organism name" value="human"/>
</dbReference>
<dbReference type="EvolutionaryTrace" id="Q9H6T3"/>
<dbReference type="GenomeRNAi" id="79657"/>
<dbReference type="Pharos" id="Q9H6T3">
    <property type="development level" value="Tbio"/>
</dbReference>
<dbReference type="PRO" id="PR:Q9H6T3"/>
<dbReference type="Proteomes" id="UP000005640">
    <property type="component" value="Chromosome 12"/>
</dbReference>
<dbReference type="RNAct" id="Q9H6T3">
    <property type="molecule type" value="protein"/>
</dbReference>
<dbReference type="Bgee" id="ENSG00000005175">
    <property type="expression patterns" value="Expressed in monocyte and 192 other cell types or tissues"/>
</dbReference>
<dbReference type="GO" id="GO:0036064">
    <property type="term" value="C:ciliary basal body"/>
    <property type="evidence" value="ECO:0000314"/>
    <property type="project" value="HPA"/>
</dbReference>
<dbReference type="GO" id="GO:0005929">
    <property type="term" value="C:cilium"/>
    <property type="evidence" value="ECO:0000314"/>
    <property type="project" value="HPA"/>
</dbReference>
<dbReference type="GO" id="GO:0005829">
    <property type="term" value="C:cytosol"/>
    <property type="evidence" value="ECO:0000314"/>
    <property type="project" value="HPA"/>
</dbReference>
<dbReference type="GO" id="GO:0101031">
    <property type="term" value="C:protein folding chaperone complex"/>
    <property type="evidence" value="ECO:0000353"/>
    <property type="project" value="ComplexPortal"/>
</dbReference>
<dbReference type="GO" id="GO:0097255">
    <property type="term" value="C:R2TP complex"/>
    <property type="evidence" value="ECO:0000314"/>
    <property type="project" value="UniProtKB"/>
</dbReference>
<dbReference type="GO" id="GO:1990062">
    <property type="term" value="C:RPAP3/R2TP/prefoldin-like complex"/>
    <property type="evidence" value="ECO:0000353"/>
    <property type="project" value="ComplexPortal"/>
</dbReference>
<dbReference type="GO" id="GO:0050821">
    <property type="term" value="P:protein stabilization"/>
    <property type="evidence" value="ECO:0000303"/>
    <property type="project" value="ComplexPortal"/>
</dbReference>
<dbReference type="FunFam" id="1.25.40.10:FF:000057">
    <property type="entry name" value="RNA polymerase II associated protein 3"/>
    <property type="match status" value="2"/>
</dbReference>
<dbReference type="Gene3D" id="1.25.40.10">
    <property type="entry name" value="Tetratricopeptide repeat domain"/>
    <property type="match status" value="2"/>
</dbReference>
<dbReference type="InterPro" id="IPR051966">
    <property type="entry name" value="RPAP3"/>
</dbReference>
<dbReference type="InterPro" id="IPR025986">
    <property type="entry name" value="RPAP3-like_C"/>
</dbReference>
<dbReference type="InterPro" id="IPR011990">
    <property type="entry name" value="TPR-like_helical_dom_sf"/>
</dbReference>
<dbReference type="InterPro" id="IPR019734">
    <property type="entry name" value="TPR_rpt"/>
</dbReference>
<dbReference type="PANTHER" id="PTHR46423">
    <property type="entry name" value="RNA POLYMERASE II-ASSOCIATED PROTEIN 3"/>
    <property type="match status" value="1"/>
</dbReference>
<dbReference type="PANTHER" id="PTHR46423:SF1">
    <property type="entry name" value="RNA POLYMERASE II-ASSOCIATED PROTEIN 3"/>
    <property type="match status" value="1"/>
</dbReference>
<dbReference type="Pfam" id="PF13877">
    <property type="entry name" value="RPAP3_C"/>
    <property type="match status" value="1"/>
</dbReference>
<dbReference type="Pfam" id="PF00515">
    <property type="entry name" value="TPR_1"/>
    <property type="match status" value="2"/>
</dbReference>
<dbReference type="Pfam" id="PF13432">
    <property type="entry name" value="TPR_16"/>
    <property type="match status" value="1"/>
</dbReference>
<dbReference type="Pfam" id="PF13181">
    <property type="entry name" value="TPR_8"/>
    <property type="match status" value="1"/>
</dbReference>
<dbReference type="SMART" id="SM00028">
    <property type="entry name" value="TPR"/>
    <property type="match status" value="6"/>
</dbReference>
<dbReference type="SUPFAM" id="SSF48452">
    <property type="entry name" value="TPR-like"/>
    <property type="match status" value="2"/>
</dbReference>
<dbReference type="PROSITE" id="PS50005">
    <property type="entry name" value="TPR"/>
    <property type="match status" value="5"/>
</dbReference>
<dbReference type="PROSITE" id="PS50293">
    <property type="entry name" value="TPR_REGION"/>
    <property type="match status" value="1"/>
</dbReference>
<proteinExistence type="evidence at protein level"/>
<sequence length="665" mass="75719">MTSANKAIELQLQVKQNAEELQDFMRDLENWEKDIKQKDMELRRQNGVPEENLPPIRNGNFRKKKKGKAKESSKKTREENTKNRIKSYDYEAWAKLDVDRILDELDKDDSTHESLSQESESEEDGIHVDSQKALVLKEKGNKYFKQGKYDEAIDCYTKGMDADPYNPVLPTNRASAYFRLKKFAVAESDCNLAVALNRSYTKAYSRRGAARFALQKLEEAKKDYERVLELEPNNFEATNELRKISQALASKENSYPKEADIVIKSTEGERKQIEAQQNKQQAISEKDRGNGFFKEGKYERAIECYTRGIAADGANALLPANRAMAYLKIQKYEEAEKDCTQAILLDGSYSKAFARRGTARTFLGKLNEAKQDFETVLLLEPGNKQAVTELSKIKKELIEKGHWDDVFLDSTQRQNVVKPIDNPPHPGSTKPLKKVIIEETGNLIQTIDVPDSTTAAAPENNPINLANVIAATGTTSKKNSSQDDLFPTSDTPRAKVLKIEEVSDTSSLQPQASLKQDVCQSYSEKMPIEIEQKPAQFATTVLPPIPANSFQLESDFRQLKSSPDMLYQYLKQIEPSLYPKLFQKNLDPDVFNQIVKILHDFYIEKEKPLLIFEILQRLSELKRFDMAVMFMSETEKKIARALFNHIDKSGLKDSSVEELKKRYGG</sequence>
<gene>
    <name type="primary">RPAP3</name>
</gene>
<accession>Q9H6T3</accession>
<accession>B4DRW9</accession>
<accession>Q6PHR5</accession>
<comment type="function">
    <text evidence="2">Forms an interface between the RNA polymerase II enzyme and chaperone/scaffolding protein, suggesting that it is required to connect RNA polymerase II to regulators of protein complex formation.</text>
</comment>
<comment type="subunit">
    <text evidence="2 3 4 5 6">Tightly associated with the RNA polymerase II complex (PubMed:17643375). Component of the R2TP complex composed at least of RUVBL1, RUVBL2, RPAP3 and PIHD1 (PubMed:20864032). Component of the PAQosome complex which is responsible for the biogenesis of several protein complexes and which consists of R2TP complex members RUVBL1, RUVBL2, RPAP3 and PIH1D1, URI complex members PFDN2, PFDN6, PDRG1, UXT and URI1 as well as ASDURF, POLR2E and DNAAF10/WDR92 (PubMed:31738558). Interacts with PIH1D1 (PubMed:21078300). Interacts with TSC1 and TSC2 (PubMed:28561026). Interacts with PRPF8 and EFTUD2 in a ZNHIT2-dependent manner (PubMed:28561026).</text>
</comment>
<comment type="interaction">
    <interactant intactId="EBI-356928">
        <id>Q9H6T3</id>
    </interactant>
    <interactant intactId="EBI-2434101">
        <id>Q96MX6</id>
        <label>DNAAF10</label>
    </interactant>
    <organismsDiffer>false</organismsDiffer>
    <experiments>7</experiments>
</comment>
<comment type="interaction">
    <interactant intactId="EBI-356928">
        <id>Q9H6T3</id>
    </interactant>
    <interactant intactId="EBI-296047">
        <id>P07900</id>
        <label>HSP90AA1</label>
    </interactant>
    <organismsDiffer>false</organismsDiffer>
    <experiments>7</experiments>
</comment>
<comment type="interaction">
    <interactant intactId="EBI-356928">
        <id>Q9H6T3</id>
    </interactant>
    <interactant intactId="EBI-352572">
        <id>P08238</id>
        <label>HSP90AB1</label>
    </interactant>
    <organismsDiffer>false</organismsDiffer>
    <experiments>2</experiments>
</comment>
<comment type="interaction">
    <interactant intactId="EBI-356928">
        <id>Q9H6T3</id>
    </interactant>
    <interactant intactId="EBI-359873">
        <id>Q9UHV9</id>
        <label>PFDN2</label>
    </interactant>
    <organismsDiffer>false</organismsDiffer>
    <experiments>3</experiments>
</comment>
<comment type="interaction">
    <interactant intactId="EBI-356928">
        <id>Q9H6T3</id>
    </interactant>
    <interactant intactId="EBI-2515113">
        <id>O14802</id>
        <label>POLR3A</label>
    </interactant>
    <organismsDiffer>false</organismsDiffer>
    <experiments>3</experiments>
</comment>
<comment type="interaction">
    <interactant intactId="EBI-356928">
        <id>Q9H6T3</id>
    </interactant>
    <interactant intactId="EBI-710997">
        <id>P54274</id>
        <label>TERF1</label>
    </interactant>
    <organismsDiffer>false</organismsDiffer>
    <experiments>2</experiments>
</comment>
<comment type="interaction">
    <interactant intactId="EBI-356928">
        <id>Q9H6T3</id>
    </interactant>
    <interactant intactId="EBI-357067">
        <id>O94763</id>
        <label>URI1</label>
    </interactant>
    <organismsDiffer>false</organismsDiffer>
    <experiments>4</experiments>
</comment>
<comment type="interaction">
    <interactant intactId="EBI-356928">
        <id>Q9H6T3</id>
    </interactant>
    <interactant intactId="EBI-357355">
        <id>Q9UBK9</id>
        <label>UXT</label>
    </interactant>
    <organismsDiffer>false</organismsDiffer>
    <experiments>4</experiments>
</comment>
<comment type="interaction">
    <interactant intactId="EBI-356928">
        <id>Q9H6T3</id>
    </interactant>
    <interactant intactId="EBI-14033488">
        <id>Q98140</id>
        <label>ORF24</label>
    </interactant>
    <organismsDiffer>true</organismsDiffer>
    <experiments>2</experiments>
</comment>
<comment type="alternative products">
    <event type="alternative splicing"/>
    <isoform>
        <id>Q9H6T3-1</id>
        <name>1</name>
        <sequence type="displayed"/>
    </isoform>
    <isoform>
        <id>Q9H6T3-2</id>
        <name>2</name>
        <sequence type="described" ref="VSP_027957"/>
    </isoform>
    <isoform>
        <id>Q9H6T3-3</id>
        <name>3</name>
        <sequence type="described" ref="VSP_044882"/>
    </isoform>
</comment>
<comment type="similarity">
    <text evidence="9">Belongs to the RPAP3 family.</text>
</comment>
<feature type="initiator methionine" description="Removed" evidence="12">
    <location>
        <position position="1"/>
    </location>
</feature>
<feature type="chain" id="PRO_0000302794" description="RNA polymerase II-associated protein 3">
    <location>
        <begin position="2"/>
        <end position="665"/>
    </location>
</feature>
<feature type="repeat" description="TPR 1">
    <location>
        <begin position="8"/>
        <end position="41"/>
    </location>
</feature>
<feature type="repeat" description="TPR 2">
    <location>
        <begin position="133"/>
        <end position="166"/>
    </location>
</feature>
<feature type="repeat" description="TPR 3">
    <location>
        <begin position="168"/>
        <end position="200"/>
    </location>
</feature>
<feature type="repeat" description="TPR 4">
    <location>
        <begin position="201"/>
        <end position="234"/>
    </location>
</feature>
<feature type="repeat" description="TPR 5">
    <location>
        <begin position="282"/>
        <end position="315"/>
    </location>
</feature>
<feature type="repeat" description="TPR 6">
    <location>
        <begin position="317"/>
        <end position="349"/>
    </location>
</feature>
<feature type="repeat" description="TPR 7">
    <location>
        <begin position="350"/>
        <end position="383"/>
    </location>
</feature>
<feature type="region of interest" description="Disordered" evidence="1">
    <location>
        <begin position="37"/>
        <end position="82"/>
    </location>
</feature>
<feature type="region of interest" description="Disordered" evidence="1">
    <location>
        <begin position="109"/>
        <end position="129"/>
    </location>
</feature>
<feature type="compositionally biased region" description="Basic and acidic residues" evidence="1">
    <location>
        <begin position="69"/>
        <end position="82"/>
    </location>
</feature>
<feature type="modified residue" description="N-acetylthreonine" evidence="12">
    <location>
        <position position="2"/>
    </location>
</feature>
<feature type="modified residue" description="Phosphoserine" evidence="10">
    <location>
        <position position="87"/>
    </location>
</feature>
<feature type="modified residue" description="Phosphoserine" evidence="10 11">
    <location>
        <position position="116"/>
    </location>
</feature>
<feature type="modified residue" description="Phosphoserine" evidence="10 11 14">
    <location>
        <position position="119"/>
    </location>
</feature>
<feature type="modified residue" description="Phosphoserine" evidence="10 11">
    <location>
        <position position="121"/>
    </location>
</feature>
<feature type="modified residue" description="Phosphoserine" evidence="10 13">
    <location>
        <position position="481"/>
    </location>
</feature>
<feature type="cross-link" description="Glycyl lysine isopeptide (Lys-Gly) (interchain with G-Cter in SUMO2)" evidence="15 16 17">
    <location>
        <position position="498"/>
    </location>
</feature>
<feature type="splice variant" id="VSP_044882" description="In isoform 3." evidence="7">
    <location>
        <begin position="1"/>
        <end position="159"/>
    </location>
</feature>
<feature type="splice variant" id="VSP_027957" description="In isoform 2." evidence="8">
    <location>
        <begin position="396"/>
        <end position="429"/>
    </location>
</feature>
<feature type="sequence variant" id="VAR_057354" description="In dbSNP:rs11168196.">
    <original>D</original>
    <variation>Y</variation>
    <location>
        <position position="564"/>
    </location>
</feature>
<feature type="sequence conflict" description="In Ref. 1; BAB15170." evidence="9" ref="1">
    <original>D</original>
    <variation>V</variation>
    <location>
        <position position="484"/>
    </location>
</feature>
<feature type="helix" evidence="22">
    <location>
        <begin position="134"/>
        <end position="145"/>
    </location>
</feature>
<feature type="helix" evidence="22">
    <location>
        <begin position="149"/>
        <end position="162"/>
    </location>
</feature>
<feature type="helix" evidence="22">
    <location>
        <begin position="168"/>
        <end position="179"/>
    </location>
</feature>
<feature type="helix" evidence="22">
    <location>
        <begin position="183"/>
        <end position="196"/>
    </location>
</feature>
<feature type="helix" evidence="22">
    <location>
        <begin position="201"/>
        <end position="213"/>
    </location>
</feature>
<feature type="helix" evidence="22">
    <location>
        <begin position="217"/>
        <end position="230"/>
    </location>
</feature>
<feature type="helix" evidence="22">
    <location>
        <begin position="235"/>
        <end position="248"/>
    </location>
</feature>
<feature type="helix" evidence="18">
    <location>
        <begin position="268"/>
        <end position="277"/>
    </location>
</feature>
<feature type="helix" evidence="18">
    <location>
        <begin position="278"/>
        <end position="280"/>
    </location>
</feature>
<feature type="helix" evidence="21">
    <location>
        <begin position="285"/>
        <end position="294"/>
    </location>
</feature>
<feature type="helix" evidence="21">
    <location>
        <begin position="298"/>
        <end position="310"/>
    </location>
</feature>
<feature type="helix" evidence="21">
    <location>
        <begin position="317"/>
        <end position="328"/>
    </location>
</feature>
<feature type="helix" evidence="21">
    <location>
        <begin position="332"/>
        <end position="345"/>
    </location>
</feature>
<feature type="helix" evidence="21">
    <location>
        <begin position="350"/>
        <end position="362"/>
    </location>
</feature>
<feature type="helix" evidence="21">
    <location>
        <begin position="366"/>
        <end position="379"/>
    </location>
</feature>
<feature type="helix" evidence="21">
    <location>
        <begin position="384"/>
        <end position="399"/>
    </location>
</feature>
<feature type="helix" evidence="21">
    <location>
        <begin position="403"/>
        <end position="407"/>
    </location>
</feature>
<feature type="strand" evidence="21">
    <location>
        <begin position="420"/>
        <end position="422"/>
    </location>
</feature>
<feature type="strand" evidence="21">
    <location>
        <begin position="433"/>
        <end position="435"/>
    </location>
</feature>
<feature type="strand" evidence="21">
    <location>
        <begin position="437"/>
        <end position="440"/>
    </location>
</feature>
<feature type="helix" evidence="19">
    <location>
        <begin position="549"/>
        <end position="559"/>
    </location>
</feature>
<feature type="helix" evidence="19">
    <location>
        <begin position="563"/>
        <end position="572"/>
    </location>
</feature>
<feature type="turn" evidence="19">
    <location>
        <begin position="575"/>
        <end position="577"/>
    </location>
</feature>
<feature type="helix" evidence="20">
    <location>
        <begin position="580"/>
        <end position="585"/>
    </location>
</feature>
<feature type="helix" evidence="20">
    <location>
        <begin position="588"/>
        <end position="604"/>
    </location>
</feature>
<feature type="helix" evidence="20">
    <location>
        <begin position="609"/>
        <end position="623"/>
    </location>
</feature>
<feature type="helix" evidence="19">
    <location>
        <begin position="624"/>
        <end position="630"/>
    </location>
</feature>
<feature type="helix" evidence="19">
    <location>
        <begin position="633"/>
        <end position="648"/>
    </location>
</feature>
<feature type="helix" evidence="19">
    <location>
        <begin position="654"/>
        <end position="664"/>
    </location>
</feature>
<keyword id="KW-0002">3D-structure</keyword>
<keyword id="KW-0007">Acetylation</keyword>
<keyword id="KW-0025">Alternative splicing</keyword>
<keyword id="KW-1017">Isopeptide bond</keyword>
<keyword id="KW-0597">Phosphoprotein</keyword>
<keyword id="KW-1267">Proteomics identification</keyword>
<keyword id="KW-1185">Reference proteome</keyword>
<keyword id="KW-0677">Repeat</keyword>
<keyword id="KW-0802">TPR repeat</keyword>
<keyword id="KW-0832">Ubl conjugation</keyword>
<evidence type="ECO:0000256" key="1">
    <source>
        <dbReference type="SAM" id="MobiDB-lite"/>
    </source>
</evidence>
<evidence type="ECO:0000269" key="2">
    <source>
    </source>
</evidence>
<evidence type="ECO:0000269" key="3">
    <source>
    </source>
</evidence>
<evidence type="ECO:0000269" key="4">
    <source>
    </source>
</evidence>
<evidence type="ECO:0000269" key="5">
    <source>
    </source>
</evidence>
<evidence type="ECO:0000269" key="6">
    <source>
    </source>
</evidence>
<evidence type="ECO:0000303" key="7">
    <source>
    </source>
</evidence>
<evidence type="ECO:0000303" key="8">
    <source>
    </source>
</evidence>
<evidence type="ECO:0000305" key="9"/>
<evidence type="ECO:0007744" key="10">
    <source>
    </source>
</evidence>
<evidence type="ECO:0007744" key="11">
    <source>
    </source>
</evidence>
<evidence type="ECO:0007744" key="12">
    <source>
    </source>
</evidence>
<evidence type="ECO:0007744" key="13">
    <source>
    </source>
</evidence>
<evidence type="ECO:0007744" key="14">
    <source>
    </source>
</evidence>
<evidence type="ECO:0007744" key="15">
    <source>
    </source>
</evidence>
<evidence type="ECO:0007744" key="16">
    <source>
    </source>
</evidence>
<evidence type="ECO:0007744" key="17">
    <source>
    </source>
</evidence>
<evidence type="ECO:0007829" key="18">
    <source>
        <dbReference type="PDB" id="4CGW"/>
    </source>
</evidence>
<evidence type="ECO:0007829" key="19">
    <source>
        <dbReference type="PDB" id="6EZ4"/>
    </source>
</evidence>
<evidence type="ECO:0007829" key="20">
    <source>
        <dbReference type="PDB" id="6FM8"/>
    </source>
</evidence>
<evidence type="ECO:0007829" key="21">
    <source>
        <dbReference type="PDB" id="6GXZ"/>
    </source>
</evidence>
<evidence type="ECO:0007829" key="22">
    <source>
        <dbReference type="PDB" id="6ZBK"/>
    </source>
</evidence>